<name>TTRA_ARCFU</name>
<keyword id="KW-0004">4Fe-4S</keyword>
<keyword id="KW-1003">Cell membrane</keyword>
<keyword id="KW-0408">Iron</keyword>
<keyword id="KW-0411">Iron-sulfur</keyword>
<keyword id="KW-0472">Membrane</keyword>
<keyword id="KW-0479">Metal-binding</keyword>
<keyword id="KW-0500">Molybdenum</keyword>
<keyword id="KW-0560">Oxidoreductase</keyword>
<keyword id="KW-1185">Reference proteome</keyword>
<keyword id="KW-0732">Signal</keyword>
<evidence type="ECO:0000250" key="1"/>
<evidence type="ECO:0000255" key="2"/>
<evidence type="ECO:0000255" key="3">
    <source>
        <dbReference type="PROSITE-ProRule" id="PRU01004"/>
    </source>
</evidence>
<evidence type="ECO:0000269" key="4">
    <source>
    </source>
</evidence>
<evidence type="ECO:0000305" key="5"/>
<proteinExistence type="evidence at protein level"/>
<comment type="function">
    <text evidence="1">Part of a membrane-bound tetrathionate reductase that catalyzes the reduction of tetrathionate to thiosulfate. TtrA is the catalytic subunit (By similarity).</text>
</comment>
<comment type="cofactor">
    <cofactor evidence="5">
        <name>[4Fe-4S] cluster</name>
        <dbReference type="ChEBI" id="CHEBI:49883"/>
    </cofactor>
    <text evidence="5">Binds 1 [4Fe-4S] cluster.</text>
</comment>
<comment type="cofactor">
    <cofactor evidence="1">
        <name>Mo-bis(molybdopterin guanine dinucleotide)</name>
        <dbReference type="ChEBI" id="CHEBI:60539"/>
    </cofactor>
    <text evidence="1">Binds 1 molybdenum-bis(molybdopterin guanine dinucleotide) (Mo-bis-MGD) cofactor per subunit.</text>
</comment>
<comment type="subunit">
    <text evidence="1 4">Probably composed of three subunits: TtrA, TtrB and TtrC (By similarity). Precursor interacts with TtrD.</text>
</comment>
<comment type="subcellular location">
    <subcellularLocation>
        <location evidence="1">Cell membrane</location>
        <topology evidence="1">Peripheral membrane protein</topology>
    </subcellularLocation>
</comment>
<comment type="domain">
    <text evidence="4">Residues 7-17 are sufficient for TtrD recognition.</text>
</comment>
<comment type="PTM">
    <text>Exported by the Tat system. The position of the signal peptide cleavage has not been experimentally proven.</text>
</comment>
<comment type="similarity">
    <text evidence="5">Belongs to the prokaryotic molybdopterin-containing oxidoreductase family.</text>
</comment>
<accession>O30078</accession>
<organism>
    <name type="scientific">Archaeoglobus fulgidus (strain ATCC 49558 / DSM 4304 / JCM 9628 / NBRC 100126 / VC-16)</name>
    <dbReference type="NCBI Taxonomy" id="224325"/>
    <lineage>
        <taxon>Archaea</taxon>
        <taxon>Methanobacteriati</taxon>
        <taxon>Methanobacteriota</taxon>
        <taxon>Archaeoglobi</taxon>
        <taxon>Archaeoglobales</taxon>
        <taxon>Archaeoglobaceae</taxon>
        <taxon>Archaeoglobus</taxon>
    </lineage>
</organism>
<gene>
    <name type="primary">ttrA</name>
    <name type="ordered locus">AF_0159</name>
</gene>
<dbReference type="EC" id="1.8.-.-"/>
<dbReference type="EMBL" id="AE000782">
    <property type="protein sequence ID" value="AAB91069.1"/>
    <property type="molecule type" value="Genomic_DNA"/>
</dbReference>
<dbReference type="PIR" id="G69269">
    <property type="entry name" value="G69269"/>
</dbReference>
<dbReference type="RefSeq" id="WP_010877671.1">
    <property type="nucleotide sequence ID" value="NC_000917.1"/>
</dbReference>
<dbReference type="STRING" id="224325.AF_0159"/>
<dbReference type="PaxDb" id="224325-AF_0159"/>
<dbReference type="EnsemblBacteria" id="AAB91069">
    <property type="protein sequence ID" value="AAB91069"/>
    <property type="gene ID" value="AF_0159"/>
</dbReference>
<dbReference type="KEGG" id="afu:AF_0159"/>
<dbReference type="eggNOG" id="arCOG01491">
    <property type="taxonomic scope" value="Archaea"/>
</dbReference>
<dbReference type="eggNOG" id="arCOG01496">
    <property type="taxonomic scope" value="Archaea"/>
</dbReference>
<dbReference type="HOGENOM" id="CLU_008235_0_0_2"/>
<dbReference type="OrthoDB" id="23466at2157"/>
<dbReference type="PhylomeDB" id="O30078"/>
<dbReference type="Proteomes" id="UP000002199">
    <property type="component" value="Chromosome"/>
</dbReference>
<dbReference type="GO" id="GO:0005886">
    <property type="term" value="C:plasma membrane"/>
    <property type="evidence" value="ECO:0007669"/>
    <property type="project" value="UniProtKB-SubCell"/>
</dbReference>
<dbReference type="GO" id="GO:0051539">
    <property type="term" value="F:4 iron, 4 sulfur cluster binding"/>
    <property type="evidence" value="ECO:0007669"/>
    <property type="project" value="UniProtKB-KW"/>
</dbReference>
<dbReference type="GO" id="GO:0046872">
    <property type="term" value="F:metal ion binding"/>
    <property type="evidence" value="ECO:0007669"/>
    <property type="project" value="UniProtKB-KW"/>
</dbReference>
<dbReference type="GO" id="GO:0043546">
    <property type="term" value="F:molybdopterin cofactor binding"/>
    <property type="evidence" value="ECO:0007669"/>
    <property type="project" value="InterPro"/>
</dbReference>
<dbReference type="GO" id="GO:0016491">
    <property type="term" value="F:oxidoreductase activity"/>
    <property type="evidence" value="ECO:0007669"/>
    <property type="project" value="UniProtKB-KW"/>
</dbReference>
<dbReference type="CDD" id="cd02780">
    <property type="entry name" value="MopB_CT_Tetrathionate_Arsenate-R"/>
    <property type="match status" value="1"/>
</dbReference>
<dbReference type="CDD" id="cd02758">
    <property type="entry name" value="MopB_Tetrathionate-Ra"/>
    <property type="match status" value="1"/>
</dbReference>
<dbReference type="Gene3D" id="2.40.40.20">
    <property type="match status" value="1"/>
</dbReference>
<dbReference type="Gene3D" id="3.30.200.210">
    <property type="match status" value="1"/>
</dbReference>
<dbReference type="Gene3D" id="3.40.50.740">
    <property type="match status" value="1"/>
</dbReference>
<dbReference type="Gene3D" id="3.40.228.10">
    <property type="entry name" value="Dimethylsulfoxide Reductase, domain 2"/>
    <property type="match status" value="1"/>
</dbReference>
<dbReference type="InterPro" id="IPR009010">
    <property type="entry name" value="Asp_de-COase-like_dom_sf"/>
</dbReference>
<dbReference type="InterPro" id="IPR037946">
    <property type="entry name" value="MopB_CT_Tetrathionate"/>
</dbReference>
<dbReference type="InterPro" id="IPR006657">
    <property type="entry name" value="MoPterin_dinucl-bd_dom"/>
</dbReference>
<dbReference type="InterPro" id="IPR006656">
    <property type="entry name" value="Mopterin_OxRdtase"/>
</dbReference>
<dbReference type="InterPro" id="IPR006963">
    <property type="entry name" value="Mopterin_OxRdtase_4Fe-4S_dom"/>
</dbReference>
<dbReference type="InterPro" id="IPR050612">
    <property type="entry name" value="Prok_Mopterin_Oxidored"/>
</dbReference>
<dbReference type="InterPro" id="IPR041929">
    <property type="entry name" value="Tetrathionate-R_A_N"/>
</dbReference>
<dbReference type="PANTHER" id="PTHR43742:SF9">
    <property type="entry name" value="TETRATHIONATE REDUCTASE SUBUNIT A"/>
    <property type="match status" value="1"/>
</dbReference>
<dbReference type="PANTHER" id="PTHR43742">
    <property type="entry name" value="TRIMETHYLAMINE-N-OXIDE REDUCTASE"/>
    <property type="match status" value="1"/>
</dbReference>
<dbReference type="Pfam" id="PF00384">
    <property type="entry name" value="Molybdopterin"/>
    <property type="match status" value="1"/>
</dbReference>
<dbReference type="Pfam" id="PF01568">
    <property type="entry name" value="Molydop_binding"/>
    <property type="match status" value="1"/>
</dbReference>
<dbReference type="SMART" id="SM00926">
    <property type="entry name" value="Molybdop_Fe4S4"/>
    <property type="match status" value="1"/>
</dbReference>
<dbReference type="SUPFAM" id="SSF50692">
    <property type="entry name" value="ADC-like"/>
    <property type="match status" value="1"/>
</dbReference>
<dbReference type="SUPFAM" id="SSF53706">
    <property type="entry name" value="Formate dehydrogenase/DMSO reductase, domains 1-3"/>
    <property type="match status" value="1"/>
</dbReference>
<dbReference type="PROSITE" id="PS51669">
    <property type="entry name" value="4FE4S_MOW_BIS_MGD"/>
    <property type="match status" value="1"/>
</dbReference>
<reference key="1">
    <citation type="journal article" date="1997" name="Nature">
        <title>The complete genome sequence of the hyperthermophilic, sulphate-reducing archaeon Archaeoglobus fulgidus.</title>
        <authorList>
            <person name="Klenk H.-P."/>
            <person name="Clayton R.A."/>
            <person name="Tomb J.-F."/>
            <person name="White O."/>
            <person name="Nelson K.E."/>
            <person name="Ketchum K.A."/>
            <person name="Dodson R.J."/>
            <person name="Gwinn M.L."/>
            <person name="Hickey E.K."/>
            <person name="Peterson J.D."/>
            <person name="Richardson D.L."/>
            <person name="Kerlavage A.R."/>
            <person name="Graham D.E."/>
            <person name="Kyrpides N.C."/>
            <person name="Fleischmann R.D."/>
            <person name="Quackenbush J."/>
            <person name="Lee N.H."/>
            <person name="Sutton G.G."/>
            <person name="Gill S.R."/>
            <person name="Kirkness E.F."/>
            <person name="Dougherty B.A."/>
            <person name="McKenney K."/>
            <person name="Adams M.D."/>
            <person name="Loftus B.J."/>
            <person name="Peterson S.N."/>
            <person name="Reich C.I."/>
            <person name="McNeil L.K."/>
            <person name="Badger J.H."/>
            <person name="Glodek A."/>
            <person name="Zhou L."/>
            <person name="Overbeek R."/>
            <person name="Gocayne J.D."/>
            <person name="Weidman J.F."/>
            <person name="McDonald L.A."/>
            <person name="Utterback T.R."/>
            <person name="Cotton M.D."/>
            <person name="Spriggs T."/>
            <person name="Artiach P."/>
            <person name="Kaine B.P."/>
            <person name="Sykes S.M."/>
            <person name="Sadow P.W."/>
            <person name="D'Andrea K.P."/>
            <person name="Bowman C."/>
            <person name="Fujii C."/>
            <person name="Garland S.A."/>
            <person name="Mason T.M."/>
            <person name="Olsen G.J."/>
            <person name="Fraser C.M."/>
            <person name="Smith H.O."/>
            <person name="Woese C.R."/>
            <person name="Venter J.C."/>
        </authorList>
    </citation>
    <scope>NUCLEOTIDE SEQUENCE [LARGE SCALE GENOMIC DNA]</scope>
    <source>
        <strain>ATCC 49558 / DSM 4304 / JCM 9628 / NBRC 100126 / VC-16</strain>
    </source>
</reference>
<reference key="2">
    <citation type="journal article" date="2012" name="Biochemistry">
        <title>Conserved signal peptide recognition systems across the prokaryotic domains.</title>
        <authorList>
            <person name="Coulthurst S.J."/>
            <person name="Dawson A."/>
            <person name="Hunter W.N."/>
            <person name="Sargent F."/>
        </authorList>
    </citation>
    <scope>INTERACTION WITH TTRD</scope>
    <scope>EXPORT VIA THE TAT-SYSTEM</scope>
    <scope>DOMAIN</scope>
    <scope>GENE NAME</scope>
    <scope>MUTAGENESIS OF ARG-6; VAL-15; SER-17; VAL-20; LEU-22 AND GLY-24</scope>
    <source>
        <strain>ATCC 49558 / DSM 4304 / JCM 9628 / NBRC 100126 / VC-16</strain>
    </source>
</reference>
<sequence length="1134" mass="127689">MQLSRRDFIKGLVAVGSASVFLAGYSETVDRLVKPRYTEVKPDSVGRIVHSACLGCNVRCGIRVNVVQRGGMEVVERISGNPYHVYNRYVSKEKQSRRYEPLPYNTPITEGLKYSGTLCARGEDGIHYLYDPYRIIVPLKRAGPRGSGKFKPITWEQLINEVVNGGVIEETGERLPGLKELFAYGILSEAGFDANAVLSEMKKDVDAIMEIAKDDTKSYGELTEAINNFKAKWSAKLGEKGLKLEDILIDPDRPDLGTKANQLVYMRGRGQGHADYFYQRWTYAFGSVNWLRHTSSCQLGYYAGNKIWSGYHDVQADPIGAKLLLMVGAQMGRLHPGATGQGLIVERAAEGELKVYYVNPTAPRTTANGNIVWVPIRPGTDAAFAMALLRVMFERGYYDAEFLSYANTDAARKAGYPLNTNASWLVIWEGDRKGEFLKGEDIGLGSDNPVVYAGSFVTNDSVEKAEIFFDGYVETKEGKRRVKSALQILKEECFSRSVEEWCEICGVDVAVIYEIAEEIRKAMPNCGTIVHRGAGMHTNGEYNVWALRCIDMLIGNIHRKGGLMTRASHTNYNKELYYVDKSKFGEPVRWGPPIDRHKVAYEDSLEYWMKKKRGENPYPAKRPWYPLTPEESYTEMFAGIAEEYPYPIKALIMYYANPVLSANFGVKFIEVLKDTSKLPLFIAITTSINETFLYADYIVPDTMYLETGTMGINYLYATSASVTLAEYWRSPAVMPMTQLVGTCPNGHPKYASMWEFLIDIALKLKMPGYGKGAVKGVGAYDGQKFDLYCAWEYIMYVFANAAMDAKKRGLIPETVSDEEVDFVEKNYPIARFKDIVPNEWRYVAYGLARGGVFTRYEDSFDERGYSKRKPWTDTVYFWSEKLAKARNSVTGEKFYGGPKYLPPATYAPLGTERRFYGTPLREIYPESQYPFLVVPPGSPLFTKHRSMFYYWLKQVMPENFAVINPEDAEKLGIESGDVIKIVTPTGELEVVAAVEPTVVKGTIAIPVGMGRWADSAVKKPAYFRLNDGSVAALVSELPDGASLPSDAVNPVKQLDETKKRILFTKSDRRYYDDLGIDSWRFSGVTPNVVACVDTSLDNWPLLSWIGAAQVYFFIPAKVEKTGKRKKFEMPNVWW</sequence>
<protein>
    <recommendedName>
        <fullName>Tetrathionate reductase subunit A</fullName>
        <ecNumber>1.8.-.-</ecNumber>
    </recommendedName>
    <alternativeName>
        <fullName>Tetrathionate reductase molybdenum subunit</fullName>
    </alternativeName>
</protein>
<feature type="signal peptide" description="Tat-type signal" evidence="2">
    <location>
        <begin position="1"/>
        <end position="31"/>
    </location>
</feature>
<feature type="chain" id="PRO_0000417415" description="Tetrathionate reductase subunit A">
    <location>
        <begin position="32"/>
        <end position="1134"/>
    </location>
</feature>
<feature type="domain" description="4Fe-4S Mo/W bis-MGD-type" evidence="3">
    <location>
        <begin position="46"/>
        <end position="133"/>
    </location>
</feature>
<feature type="binding site" evidence="3">
    <location>
        <position position="53"/>
    </location>
    <ligand>
        <name>[4Fe-4S] cluster</name>
        <dbReference type="ChEBI" id="CHEBI:49883"/>
    </ligand>
</feature>
<feature type="binding site" evidence="3">
    <location>
        <position position="56"/>
    </location>
    <ligand>
        <name>[4Fe-4S] cluster</name>
        <dbReference type="ChEBI" id="CHEBI:49883"/>
    </ligand>
</feature>
<feature type="binding site" evidence="3">
    <location>
        <position position="60"/>
    </location>
    <ligand>
        <name>[4Fe-4S] cluster</name>
        <dbReference type="ChEBI" id="CHEBI:49883"/>
    </ligand>
</feature>
<feature type="binding site" evidence="3">
    <location>
        <position position="119"/>
    </location>
    <ligand>
        <name>[4Fe-4S] cluster</name>
        <dbReference type="ChEBI" id="CHEBI:49883"/>
    </ligand>
</feature>
<feature type="mutagenesis site" description="Does not affect TtrD binding." evidence="4">
    <original>R</original>
    <variation>Q</variation>
    <location>
        <position position="6"/>
    </location>
</feature>
<feature type="mutagenesis site" description="Strong decrease in TtrD binding." evidence="4">
    <original>V</original>
    <variation>Q</variation>
    <location>
        <position position="15"/>
    </location>
</feature>
<feature type="mutagenesis site" description="Does not affect TtrD binding." evidence="4">
    <original>S</original>
    <variation>Q</variation>
    <location>
        <position position="17"/>
    </location>
</feature>
<feature type="mutagenesis site" description="Does not affect TtrD binding." evidence="4">
    <original>V</original>
    <variation>Q</variation>
    <location>
        <position position="20"/>
    </location>
</feature>
<feature type="mutagenesis site" description="Does not affect TtrD binding." evidence="4">
    <original>L</original>
    <variation>Q</variation>
    <location>
        <position position="22"/>
    </location>
</feature>
<feature type="mutagenesis site" description="Does not affect TtrD binding." evidence="4">
    <original>G</original>
    <variation>Q</variation>
    <location>
        <position position="24"/>
    </location>
</feature>